<accession>Q72YK9</accession>
<name>MENE_BACC1</name>
<feature type="chain" id="PRO_0000193155" description="2-succinylbenzoate--CoA ligase">
    <location>
        <begin position="1"/>
        <end position="481"/>
    </location>
</feature>
<dbReference type="EC" id="6.2.1.26" evidence="1"/>
<dbReference type="EMBL" id="AE017194">
    <property type="protein sequence ID" value="AAS43913.1"/>
    <property type="molecule type" value="Genomic_DNA"/>
</dbReference>
<dbReference type="SMR" id="Q72YK9"/>
<dbReference type="KEGG" id="bca:BCE_5012"/>
<dbReference type="HOGENOM" id="CLU_000022_59_0_9"/>
<dbReference type="UniPathway" id="UPA00079"/>
<dbReference type="UniPathway" id="UPA01057">
    <property type="reaction ID" value="UER00166"/>
</dbReference>
<dbReference type="Proteomes" id="UP000002527">
    <property type="component" value="Chromosome"/>
</dbReference>
<dbReference type="GO" id="GO:0005524">
    <property type="term" value="F:ATP binding"/>
    <property type="evidence" value="ECO:0007669"/>
    <property type="project" value="UniProtKB-KW"/>
</dbReference>
<dbReference type="GO" id="GO:0008756">
    <property type="term" value="F:o-succinylbenzoate-CoA ligase activity"/>
    <property type="evidence" value="ECO:0007669"/>
    <property type="project" value="UniProtKB-UniRule"/>
</dbReference>
<dbReference type="GO" id="GO:0009234">
    <property type="term" value="P:menaquinone biosynthetic process"/>
    <property type="evidence" value="ECO:0007669"/>
    <property type="project" value="UniProtKB-UniRule"/>
</dbReference>
<dbReference type="CDD" id="cd05912">
    <property type="entry name" value="OSB_CoA_lg"/>
    <property type="match status" value="1"/>
</dbReference>
<dbReference type="FunFam" id="3.30.300.30:FF:000008">
    <property type="entry name" value="2,3-dihydroxybenzoate-AMP ligase"/>
    <property type="match status" value="1"/>
</dbReference>
<dbReference type="Gene3D" id="3.30.300.30">
    <property type="match status" value="1"/>
</dbReference>
<dbReference type="Gene3D" id="3.40.50.12780">
    <property type="entry name" value="N-terminal domain of ligase-like"/>
    <property type="match status" value="1"/>
</dbReference>
<dbReference type="HAMAP" id="MF_00731">
    <property type="entry name" value="MenE"/>
    <property type="match status" value="1"/>
</dbReference>
<dbReference type="InterPro" id="IPR025110">
    <property type="entry name" value="AMP-bd_C"/>
</dbReference>
<dbReference type="InterPro" id="IPR045851">
    <property type="entry name" value="AMP-bd_C_sf"/>
</dbReference>
<dbReference type="InterPro" id="IPR020845">
    <property type="entry name" value="AMP-binding_CS"/>
</dbReference>
<dbReference type="InterPro" id="IPR000873">
    <property type="entry name" value="AMP-dep_synth/lig_dom"/>
</dbReference>
<dbReference type="InterPro" id="IPR042099">
    <property type="entry name" value="ANL_N_sf"/>
</dbReference>
<dbReference type="InterPro" id="IPR010192">
    <property type="entry name" value="MenE"/>
</dbReference>
<dbReference type="NCBIfam" id="TIGR01923">
    <property type="entry name" value="menE"/>
    <property type="match status" value="1"/>
</dbReference>
<dbReference type="NCBIfam" id="NF002966">
    <property type="entry name" value="PRK03640.1"/>
    <property type="match status" value="1"/>
</dbReference>
<dbReference type="PANTHER" id="PTHR24096:SF149">
    <property type="entry name" value="AMP-BINDING DOMAIN-CONTAINING PROTEIN-RELATED"/>
    <property type="match status" value="1"/>
</dbReference>
<dbReference type="PANTHER" id="PTHR24096">
    <property type="entry name" value="LONG-CHAIN-FATTY-ACID--COA LIGASE"/>
    <property type="match status" value="1"/>
</dbReference>
<dbReference type="Pfam" id="PF00501">
    <property type="entry name" value="AMP-binding"/>
    <property type="match status" value="1"/>
</dbReference>
<dbReference type="Pfam" id="PF13193">
    <property type="entry name" value="AMP-binding_C"/>
    <property type="match status" value="1"/>
</dbReference>
<dbReference type="SUPFAM" id="SSF56801">
    <property type="entry name" value="Acetyl-CoA synthetase-like"/>
    <property type="match status" value="1"/>
</dbReference>
<dbReference type="PROSITE" id="PS00455">
    <property type="entry name" value="AMP_BINDING"/>
    <property type="match status" value="1"/>
</dbReference>
<gene>
    <name evidence="1" type="primary">menE</name>
    <name type="ordered locus">BCE_5012</name>
</gene>
<sequence length="481" mass="53501">METMPNWLMQRAFLTPDRTAIEIEEEKVTFMQLHEKVVSVCEHLTHIGVKRGQKVAVLMKNGMEMITVIHALSYVGAVAVLLNTRLSREELLWQMDDAEVICLVTDQDFDAKDIPVYSFAEVMNGPKEEASIQEEFSLEEAMTIIYTSGTTGKPKGVILTYGNHWASAVGSSLNLGLRDDDCWLACMPMFHVGGLSLLMKNIMYGMRILLVPKYDADFIHKALQTRGVTIISVVSKMLTDLLERLGAETYPSSLRCMLLGGGPAPKPLLETCVEKGIPVYQTYGMTETSSQICTLSADYMLTKVGSAGKPLFQCQLRIEKDGVVVPAFTEGEIVVKGPNVTGGYFNREDATRETIQNGWLHTGDIGYLDEEGFLYVLDRRSDLIISGGENIYPAQIEEVLLSHPAVAEAGVVGMTDDKWGQVPVAFVVKSGEVTEEEIIHFCEAKLAKYKVPKKACFLEELPRNASKKLLRRELRQLVEEM</sequence>
<protein>
    <recommendedName>
        <fullName evidence="1">2-succinylbenzoate--CoA ligase</fullName>
        <ecNumber evidence="1">6.2.1.26</ecNumber>
    </recommendedName>
    <alternativeName>
        <fullName evidence="1">o-succinylbenzoyl-CoA synthetase</fullName>
        <shortName evidence="1">OSB-CoA synthetase</shortName>
    </alternativeName>
</protein>
<keyword id="KW-0067">ATP-binding</keyword>
<keyword id="KW-0436">Ligase</keyword>
<keyword id="KW-0474">Menaquinone biosynthesis</keyword>
<keyword id="KW-0547">Nucleotide-binding</keyword>
<evidence type="ECO:0000255" key="1">
    <source>
        <dbReference type="HAMAP-Rule" id="MF_00731"/>
    </source>
</evidence>
<comment type="function">
    <text evidence="1">Converts 2-succinylbenzoate (OSB) to 2-succinylbenzoyl-CoA (OSB-CoA).</text>
</comment>
<comment type="catalytic activity">
    <reaction evidence="1">
        <text>2-succinylbenzoate + ATP + CoA = 2-succinylbenzoyl-CoA + AMP + diphosphate</text>
        <dbReference type="Rhea" id="RHEA:17009"/>
        <dbReference type="ChEBI" id="CHEBI:18325"/>
        <dbReference type="ChEBI" id="CHEBI:30616"/>
        <dbReference type="ChEBI" id="CHEBI:33019"/>
        <dbReference type="ChEBI" id="CHEBI:57287"/>
        <dbReference type="ChEBI" id="CHEBI:57364"/>
        <dbReference type="ChEBI" id="CHEBI:456215"/>
        <dbReference type="EC" id="6.2.1.26"/>
    </reaction>
</comment>
<comment type="pathway">
    <text evidence="1">Quinol/quinone metabolism; 1,4-dihydroxy-2-naphthoate biosynthesis; 1,4-dihydroxy-2-naphthoate from chorismate: step 5/7.</text>
</comment>
<comment type="pathway">
    <text evidence="1">Quinol/quinone metabolism; menaquinone biosynthesis.</text>
</comment>
<comment type="similarity">
    <text evidence="1">Belongs to the ATP-dependent AMP-binding enzyme family. MenE subfamily.</text>
</comment>
<reference key="1">
    <citation type="journal article" date="2004" name="Nucleic Acids Res.">
        <title>The genome sequence of Bacillus cereus ATCC 10987 reveals metabolic adaptations and a large plasmid related to Bacillus anthracis pXO1.</title>
        <authorList>
            <person name="Rasko D.A."/>
            <person name="Ravel J."/>
            <person name="Oekstad O.A."/>
            <person name="Helgason E."/>
            <person name="Cer R.Z."/>
            <person name="Jiang L."/>
            <person name="Shores K.A."/>
            <person name="Fouts D.E."/>
            <person name="Tourasse N.J."/>
            <person name="Angiuoli S.V."/>
            <person name="Kolonay J.F."/>
            <person name="Nelson W.C."/>
            <person name="Kolstoe A.-B."/>
            <person name="Fraser C.M."/>
            <person name="Read T.D."/>
        </authorList>
    </citation>
    <scope>NUCLEOTIDE SEQUENCE [LARGE SCALE GENOMIC DNA]</scope>
    <source>
        <strain>ATCC 10987 / NRS 248</strain>
    </source>
</reference>
<proteinExistence type="inferred from homology"/>
<organism>
    <name type="scientific">Bacillus cereus (strain ATCC 10987 / NRS 248)</name>
    <dbReference type="NCBI Taxonomy" id="222523"/>
    <lineage>
        <taxon>Bacteria</taxon>
        <taxon>Bacillati</taxon>
        <taxon>Bacillota</taxon>
        <taxon>Bacilli</taxon>
        <taxon>Bacillales</taxon>
        <taxon>Bacillaceae</taxon>
        <taxon>Bacillus</taxon>
        <taxon>Bacillus cereus group</taxon>
    </lineage>
</organism>